<reference key="1">
    <citation type="journal article" date="2009" name="PLoS Genet.">
        <title>Organised genome dynamics in the Escherichia coli species results in highly diverse adaptive paths.</title>
        <authorList>
            <person name="Touchon M."/>
            <person name="Hoede C."/>
            <person name="Tenaillon O."/>
            <person name="Barbe V."/>
            <person name="Baeriswyl S."/>
            <person name="Bidet P."/>
            <person name="Bingen E."/>
            <person name="Bonacorsi S."/>
            <person name="Bouchier C."/>
            <person name="Bouvet O."/>
            <person name="Calteau A."/>
            <person name="Chiapello H."/>
            <person name="Clermont O."/>
            <person name="Cruveiller S."/>
            <person name="Danchin A."/>
            <person name="Diard M."/>
            <person name="Dossat C."/>
            <person name="Karoui M.E."/>
            <person name="Frapy E."/>
            <person name="Garry L."/>
            <person name="Ghigo J.M."/>
            <person name="Gilles A.M."/>
            <person name="Johnson J."/>
            <person name="Le Bouguenec C."/>
            <person name="Lescat M."/>
            <person name="Mangenot S."/>
            <person name="Martinez-Jehanne V."/>
            <person name="Matic I."/>
            <person name="Nassif X."/>
            <person name="Oztas S."/>
            <person name="Petit M.A."/>
            <person name="Pichon C."/>
            <person name="Rouy Z."/>
            <person name="Ruf C.S."/>
            <person name="Schneider D."/>
            <person name="Tourret J."/>
            <person name="Vacherie B."/>
            <person name="Vallenet D."/>
            <person name="Medigue C."/>
            <person name="Rocha E.P.C."/>
            <person name="Denamur E."/>
        </authorList>
    </citation>
    <scope>NUCLEOTIDE SEQUENCE [LARGE SCALE GENOMIC DNA]</scope>
    <source>
        <strain>IAI39 / ExPEC</strain>
    </source>
</reference>
<sequence>MAEKRNIFLVGPMGAGKSTIGRQLAQQLNMEFYDSDQEIEKRTGADVGWVFDLEGEEGFRDREEKVINELTEKQGIVLATGGGSVKSRETRNRLSARGVVVYLETTIEKQLARTQRDKKRPLLHVETPPREVLEALANERNPLYEEIADVTIRTDDQSAKVVANQIIHMLESN</sequence>
<gene>
    <name evidence="1" type="primary">aroK</name>
    <name type="ordered locus">ECIAI39_3868</name>
</gene>
<keyword id="KW-0028">Amino-acid biosynthesis</keyword>
<keyword id="KW-0057">Aromatic amino acid biosynthesis</keyword>
<keyword id="KW-0067">ATP-binding</keyword>
<keyword id="KW-0963">Cytoplasm</keyword>
<keyword id="KW-0418">Kinase</keyword>
<keyword id="KW-0460">Magnesium</keyword>
<keyword id="KW-0479">Metal-binding</keyword>
<keyword id="KW-0547">Nucleotide-binding</keyword>
<keyword id="KW-0808">Transferase</keyword>
<comment type="function">
    <text evidence="1">Catalyzes the specific phosphorylation of the 3-hydroxyl group of shikimic acid using ATP as a cosubstrate.</text>
</comment>
<comment type="catalytic activity">
    <reaction evidence="1">
        <text>shikimate + ATP = 3-phosphoshikimate + ADP + H(+)</text>
        <dbReference type="Rhea" id="RHEA:13121"/>
        <dbReference type="ChEBI" id="CHEBI:15378"/>
        <dbReference type="ChEBI" id="CHEBI:30616"/>
        <dbReference type="ChEBI" id="CHEBI:36208"/>
        <dbReference type="ChEBI" id="CHEBI:145989"/>
        <dbReference type="ChEBI" id="CHEBI:456216"/>
        <dbReference type="EC" id="2.7.1.71"/>
    </reaction>
</comment>
<comment type="cofactor">
    <cofactor evidence="1">
        <name>Mg(2+)</name>
        <dbReference type="ChEBI" id="CHEBI:18420"/>
    </cofactor>
    <text evidence="1">Binds 1 Mg(2+) ion per subunit.</text>
</comment>
<comment type="pathway">
    <text evidence="1">Metabolic intermediate biosynthesis; chorismate biosynthesis; chorismate from D-erythrose 4-phosphate and phosphoenolpyruvate: step 5/7.</text>
</comment>
<comment type="subunit">
    <text evidence="1">Monomer.</text>
</comment>
<comment type="subcellular location">
    <subcellularLocation>
        <location evidence="1">Cytoplasm</location>
    </subcellularLocation>
</comment>
<comment type="similarity">
    <text evidence="1">Belongs to the shikimate kinase family.</text>
</comment>
<evidence type="ECO:0000255" key="1">
    <source>
        <dbReference type="HAMAP-Rule" id="MF_00109"/>
    </source>
</evidence>
<name>AROK_ECO7I</name>
<accession>B7NMF3</accession>
<organism>
    <name type="scientific">Escherichia coli O7:K1 (strain IAI39 / ExPEC)</name>
    <dbReference type="NCBI Taxonomy" id="585057"/>
    <lineage>
        <taxon>Bacteria</taxon>
        <taxon>Pseudomonadati</taxon>
        <taxon>Pseudomonadota</taxon>
        <taxon>Gammaproteobacteria</taxon>
        <taxon>Enterobacterales</taxon>
        <taxon>Enterobacteriaceae</taxon>
        <taxon>Escherichia</taxon>
    </lineage>
</organism>
<feature type="chain" id="PRO_1000117461" description="Shikimate kinase 1">
    <location>
        <begin position="1"/>
        <end position="173"/>
    </location>
</feature>
<feature type="binding site" evidence="1">
    <location>
        <begin position="14"/>
        <end position="19"/>
    </location>
    <ligand>
        <name>ATP</name>
        <dbReference type="ChEBI" id="CHEBI:30616"/>
    </ligand>
</feature>
<feature type="binding site" evidence="1">
    <location>
        <position position="18"/>
    </location>
    <ligand>
        <name>Mg(2+)</name>
        <dbReference type="ChEBI" id="CHEBI:18420"/>
    </ligand>
</feature>
<feature type="binding site" evidence="1">
    <location>
        <position position="36"/>
    </location>
    <ligand>
        <name>substrate</name>
    </ligand>
</feature>
<feature type="binding site" evidence="1">
    <location>
        <position position="60"/>
    </location>
    <ligand>
        <name>substrate</name>
    </ligand>
</feature>
<feature type="binding site" evidence="1">
    <location>
        <position position="82"/>
    </location>
    <ligand>
        <name>substrate</name>
    </ligand>
</feature>
<feature type="binding site" evidence="1">
    <location>
        <position position="120"/>
    </location>
    <ligand>
        <name>ATP</name>
        <dbReference type="ChEBI" id="CHEBI:30616"/>
    </ligand>
</feature>
<feature type="binding site" evidence="1">
    <location>
        <position position="140"/>
    </location>
    <ligand>
        <name>substrate</name>
    </ligand>
</feature>
<feature type="binding site" evidence="1">
    <location>
        <position position="157"/>
    </location>
    <ligand>
        <name>ATP</name>
        <dbReference type="ChEBI" id="CHEBI:30616"/>
    </ligand>
</feature>
<dbReference type="EC" id="2.7.1.71" evidence="1"/>
<dbReference type="EMBL" id="CU928164">
    <property type="protein sequence ID" value="CAR19981.1"/>
    <property type="molecule type" value="Genomic_DNA"/>
</dbReference>
<dbReference type="RefSeq" id="WP_000818618.1">
    <property type="nucleotide sequence ID" value="NC_011750.1"/>
</dbReference>
<dbReference type="RefSeq" id="YP_002409762.1">
    <property type="nucleotide sequence ID" value="NC_011750.1"/>
</dbReference>
<dbReference type="SMR" id="B7NMF3"/>
<dbReference type="STRING" id="585057.ECIAI39_3868"/>
<dbReference type="GeneID" id="93778608"/>
<dbReference type="KEGG" id="ect:ECIAI39_3868"/>
<dbReference type="PATRIC" id="fig|585057.6.peg.4004"/>
<dbReference type="HOGENOM" id="CLU_057607_2_2_6"/>
<dbReference type="UniPathway" id="UPA00053">
    <property type="reaction ID" value="UER00088"/>
</dbReference>
<dbReference type="Proteomes" id="UP000000749">
    <property type="component" value="Chromosome"/>
</dbReference>
<dbReference type="GO" id="GO:0005829">
    <property type="term" value="C:cytosol"/>
    <property type="evidence" value="ECO:0007669"/>
    <property type="project" value="TreeGrafter"/>
</dbReference>
<dbReference type="GO" id="GO:0005524">
    <property type="term" value="F:ATP binding"/>
    <property type="evidence" value="ECO:0007669"/>
    <property type="project" value="UniProtKB-UniRule"/>
</dbReference>
<dbReference type="GO" id="GO:0000287">
    <property type="term" value="F:magnesium ion binding"/>
    <property type="evidence" value="ECO:0007669"/>
    <property type="project" value="UniProtKB-UniRule"/>
</dbReference>
<dbReference type="GO" id="GO:0004765">
    <property type="term" value="F:shikimate kinase activity"/>
    <property type="evidence" value="ECO:0007669"/>
    <property type="project" value="UniProtKB-UniRule"/>
</dbReference>
<dbReference type="GO" id="GO:0008652">
    <property type="term" value="P:amino acid biosynthetic process"/>
    <property type="evidence" value="ECO:0007669"/>
    <property type="project" value="UniProtKB-KW"/>
</dbReference>
<dbReference type="GO" id="GO:0009073">
    <property type="term" value="P:aromatic amino acid family biosynthetic process"/>
    <property type="evidence" value="ECO:0007669"/>
    <property type="project" value="UniProtKB-KW"/>
</dbReference>
<dbReference type="GO" id="GO:0009423">
    <property type="term" value="P:chorismate biosynthetic process"/>
    <property type="evidence" value="ECO:0007669"/>
    <property type="project" value="UniProtKB-UniRule"/>
</dbReference>
<dbReference type="CDD" id="cd00464">
    <property type="entry name" value="SK"/>
    <property type="match status" value="1"/>
</dbReference>
<dbReference type="FunFam" id="3.40.50.300:FF:000099">
    <property type="entry name" value="Shikimate kinase 1"/>
    <property type="match status" value="1"/>
</dbReference>
<dbReference type="Gene3D" id="3.40.50.300">
    <property type="entry name" value="P-loop containing nucleotide triphosphate hydrolases"/>
    <property type="match status" value="1"/>
</dbReference>
<dbReference type="HAMAP" id="MF_00109">
    <property type="entry name" value="Shikimate_kinase"/>
    <property type="match status" value="1"/>
</dbReference>
<dbReference type="InterPro" id="IPR027417">
    <property type="entry name" value="P-loop_NTPase"/>
</dbReference>
<dbReference type="InterPro" id="IPR031322">
    <property type="entry name" value="Shikimate/glucono_kinase"/>
</dbReference>
<dbReference type="InterPro" id="IPR000623">
    <property type="entry name" value="Shikimate_kinase/TSH1"/>
</dbReference>
<dbReference type="InterPro" id="IPR023000">
    <property type="entry name" value="Shikimate_kinase_CS"/>
</dbReference>
<dbReference type="NCBIfam" id="NF003456">
    <property type="entry name" value="PRK05057.1"/>
    <property type="match status" value="1"/>
</dbReference>
<dbReference type="PANTHER" id="PTHR21087">
    <property type="entry name" value="SHIKIMATE KINASE"/>
    <property type="match status" value="1"/>
</dbReference>
<dbReference type="PANTHER" id="PTHR21087:SF16">
    <property type="entry name" value="SHIKIMATE KINASE 1, CHLOROPLASTIC"/>
    <property type="match status" value="1"/>
</dbReference>
<dbReference type="Pfam" id="PF01202">
    <property type="entry name" value="SKI"/>
    <property type="match status" value="1"/>
</dbReference>
<dbReference type="PRINTS" id="PR01100">
    <property type="entry name" value="SHIKIMTKNASE"/>
</dbReference>
<dbReference type="SUPFAM" id="SSF52540">
    <property type="entry name" value="P-loop containing nucleoside triphosphate hydrolases"/>
    <property type="match status" value="1"/>
</dbReference>
<dbReference type="PROSITE" id="PS01128">
    <property type="entry name" value="SHIKIMATE_KINASE"/>
    <property type="match status" value="1"/>
</dbReference>
<proteinExistence type="inferred from homology"/>
<protein>
    <recommendedName>
        <fullName evidence="1">Shikimate kinase 1</fullName>
        <shortName evidence="1">SK 1</shortName>
        <ecNumber evidence="1">2.7.1.71</ecNumber>
    </recommendedName>
</protein>